<keyword id="KW-0067">ATP-binding</keyword>
<keyword id="KW-0963">Cytoplasm</keyword>
<keyword id="KW-0315">Glutamine amidotransferase</keyword>
<keyword id="KW-0378">Hydrolase</keyword>
<keyword id="KW-0436">Ligase</keyword>
<keyword id="KW-0547">Nucleotide-binding</keyword>
<keyword id="KW-0658">Purine biosynthesis</keyword>
<protein>
    <recommendedName>
        <fullName evidence="1">Phosphoribosylformylglycinamidine synthase subunit PurQ</fullName>
        <shortName evidence="1">FGAM synthase</shortName>
        <ecNumber evidence="1">6.3.5.3</ecNumber>
    </recommendedName>
    <alternativeName>
        <fullName evidence="1">Formylglycinamide ribonucleotide amidotransferase subunit I</fullName>
        <shortName evidence="1">FGAR amidotransferase I</shortName>
        <shortName evidence="1">FGAR-AT I</shortName>
    </alternativeName>
    <alternativeName>
        <fullName evidence="1">Glutaminase PurQ</fullName>
        <ecNumber evidence="1">3.5.1.2</ecNumber>
    </alternativeName>
    <alternativeName>
        <fullName evidence="1">Phosphoribosylformylglycinamidine synthase subunit I</fullName>
    </alternativeName>
</protein>
<name>PURQ_LISW6</name>
<organism>
    <name type="scientific">Listeria welshimeri serovar 6b (strain ATCC 35897 / DSM 20650 / CCUG 15529 / CIP 8149 / NCTC 11857 / SLCC 5334 / V8)</name>
    <dbReference type="NCBI Taxonomy" id="386043"/>
    <lineage>
        <taxon>Bacteria</taxon>
        <taxon>Bacillati</taxon>
        <taxon>Bacillota</taxon>
        <taxon>Bacilli</taxon>
        <taxon>Bacillales</taxon>
        <taxon>Listeriaceae</taxon>
        <taxon>Listeria</taxon>
    </lineage>
</organism>
<proteinExistence type="inferred from homology"/>
<sequence>MKFAVIQFPGSNCDLDMLHAIRDSLGEEAEYVWHAETSLEGFDAVLLPGGFSYGDYLRTGAIAKFSSIMPEVLRFAETGKPVLGVCNGFQILTEIGLLPGALIRNNNLHFICKTVPLRVVNGNTIFTGLYEDNEVIHVPVAHGEGNYYCDDETLLKLKENNQIVFTYDSVNPNGSRADIAGIVNERGNVLGMMPHPERAVEDIIGGTDGLRLFQSIVQAWKEEQVNA</sequence>
<reference key="1">
    <citation type="journal article" date="2006" name="J. Bacteriol.">
        <title>Whole-genome sequence of Listeria welshimeri reveals common steps in genome reduction with Listeria innocua as compared to Listeria monocytogenes.</title>
        <authorList>
            <person name="Hain T."/>
            <person name="Steinweg C."/>
            <person name="Kuenne C.T."/>
            <person name="Billion A."/>
            <person name="Ghai R."/>
            <person name="Chatterjee S.S."/>
            <person name="Domann E."/>
            <person name="Kaerst U."/>
            <person name="Goesmann A."/>
            <person name="Bekel T."/>
            <person name="Bartels D."/>
            <person name="Kaiser O."/>
            <person name="Meyer F."/>
            <person name="Puehler A."/>
            <person name="Weisshaar B."/>
            <person name="Wehland J."/>
            <person name="Liang C."/>
            <person name="Dandekar T."/>
            <person name="Lampidis R."/>
            <person name="Kreft J."/>
            <person name="Goebel W."/>
            <person name="Chakraborty T."/>
        </authorList>
    </citation>
    <scope>NUCLEOTIDE SEQUENCE [LARGE SCALE GENOMIC DNA]</scope>
    <source>
        <strain>ATCC 35897 / DSM 20650 / CCUG 15529 / CIP 8149 / NCTC 11857 / SLCC 5334 / V8</strain>
    </source>
</reference>
<gene>
    <name evidence="1" type="primary">purQ</name>
    <name type="ordered locus">lwe1788</name>
</gene>
<comment type="function">
    <text evidence="1">Part of the phosphoribosylformylglycinamidine synthase complex involved in the purines biosynthetic pathway. Catalyzes the ATP-dependent conversion of formylglycinamide ribonucleotide (FGAR) and glutamine to yield formylglycinamidine ribonucleotide (FGAM) and glutamate. The FGAM synthase complex is composed of three subunits. PurQ produces an ammonia molecule by converting glutamine to glutamate. PurL transfers the ammonia molecule to FGAR to form FGAM in an ATP-dependent manner. PurS interacts with PurQ and PurL and is thought to assist in the transfer of the ammonia molecule from PurQ to PurL.</text>
</comment>
<comment type="catalytic activity">
    <reaction evidence="1">
        <text>N(2)-formyl-N(1)-(5-phospho-beta-D-ribosyl)glycinamide + L-glutamine + ATP + H2O = 2-formamido-N(1)-(5-O-phospho-beta-D-ribosyl)acetamidine + L-glutamate + ADP + phosphate + H(+)</text>
        <dbReference type="Rhea" id="RHEA:17129"/>
        <dbReference type="ChEBI" id="CHEBI:15377"/>
        <dbReference type="ChEBI" id="CHEBI:15378"/>
        <dbReference type="ChEBI" id="CHEBI:29985"/>
        <dbReference type="ChEBI" id="CHEBI:30616"/>
        <dbReference type="ChEBI" id="CHEBI:43474"/>
        <dbReference type="ChEBI" id="CHEBI:58359"/>
        <dbReference type="ChEBI" id="CHEBI:147286"/>
        <dbReference type="ChEBI" id="CHEBI:147287"/>
        <dbReference type="ChEBI" id="CHEBI:456216"/>
        <dbReference type="EC" id="6.3.5.3"/>
    </reaction>
</comment>
<comment type="catalytic activity">
    <reaction evidence="1">
        <text>L-glutamine + H2O = L-glutamate + NH4(+)</text>
        <dbReference type="Rhea" id="RHEA:15889"/>
        <dbReference type="ChEBI" id="CHEBI:15377"/>
        <dbReference type="ChEBI" id="CHEBI:28938"/>
        <dbReference type="ChEBI" id="CHEBI:29985"/>
        <dbReference type="ChEBI" id="CHEBI:58359"/>
        <dbReference type="EC" id="3.5.1.2"/>
    </reaction>
</comment>
<comment type="pathway">
    <text evidence="1">Purine metabolism; IMP biosynthesis via de novo pathway; 5-amino-1-(5-phospho-D-ribosyl)imidazole from N(2)-formyl-N(1)-(5-phospho-D-ribosyl)glycinamide: step 1/2.</text>
</comment>
<comment type="subunit">
    <text evidence="1">Part of the FGAM synthase complex composed of 1 PurL, 1 PurQ and 2 PurS subunits.</text>
</comment>
<comment type="subcellular location">
    <subcellularLocation>
        <location evidence="1">Cytoplasm</location>
    </subcellularLocation>
</comment>
<evidence type="ECO:0000255" key="1">
    <source>
        <dbReference type="HAMAP-Rule" id="MF_00421"/>
    </source>
</evidence>
<accession>A0AJM4</accession>
<dbReference type="EC" id="6.3.5.3" evidence="1"/>
<dbReference type="EC" id="3.5.1.2" evidence="1"/>
<dbReference type="EMBL" id="AM263198">
    <property type="protein sequence ID" value="CAK21206.1"/>
    <property type="molecule type" value="Genomic_DNA"/>
</dbReference>
<dbReference type="RefSeq" id="WP_011702565.1">
    <property type="nucleotide sequence ID" value="NC_008555.1"/>
</dbReference>
<dbReference type="SMR" id="A0AJM4"/>
<dbReference type="STRING" id="386043.lwe1788"/>
<dbReference type="GeneID" id="61189686"/>
<dbReference type="KEGG" id="lwe:lwe1788"/>
<dbReference type="eggNOG" id="COG0047">
    <property type="taxonomic scope" value="Bacteria"/>
</dbReference>
<dbReference type="HOGENOM" id="CLU_001031_3_1_9"/>
<dbReference type="OrthoDB" id="9804441at2"/>
<dbReference type="UniPathway" id="UPA00074">
    <property type="reaction ID" value="UER00128"/>
</dbReference>
<dbReference type="Proteomes" id="UP000000779">
    <property type="component" value="Chromosome"/>
</dbReference>
<dbReference type="GO" id="GO:0005737">
    <property type="term" value="C:cytoplasm"/>
    <property type="evidence" value="ECO:0007669"/>
    <property type="project" value="UniProtKB-SubCell"/>
</dbReference>
<dbReference type="GO" id="GO:0005524">
    <property type="term" value="F:ATP binding"/>
    <property type="evidence" value="ECO:0007669"/>
    <property type="project" value="UniProtKB-KW"/>
</dbReference>
<dbReference type="GO" id="GO:0004359">
    <property type="term" value="F:glutaminase activity"/>
    <property type="evidence" value="ECO:0007669"/>
    <property type="project" value="UniProtKB-EC"/>
</dbReference>
<dbReference type="GO" id="GO:0004642">
    <property type="term" value="F:phosphoribosylformylglycinamidine synthase activity"/>
    <property type="evidence" value="ECO:0007669"/>
    <property type="project" value="UniProtKB-UniRule"/>
</dbReference>
<dbReference type="GO" id="GO:0006189">
    <property type="term" value="P:'de novo' IMP biosynthetic process"/>
    <property type="evidence" value="ECO:0007669"/>
    <property type="project" value="UniProtKB-UniRule"/>
</dbReference>
<dbReference type="CDD" id="cd01740">
    <property type="entry name" value="GATase1_FGAR_AT"/>
    <property type="match status" value="1"/>
</dbReference>
<dbReference type="FunFam" id="3.40.50.880:FF:000019">
    <property type="entry name" value="Phosphoribosylformylglycinamidine synthase subunit PurQ"/>
    <property type="match status" value="1"/>
</dbReference>
<dbReference type="Gene3D" id="3.40.50.880">
    <property type="match status" value="1"/>
</dbReference>
<dbReference type="HAMAP" id="MF_00421">
    <property type="entry name" value="PurQ"/>
    <property type="match status" value="1"/>
</dbReference>
<dbReference type="InterPro" id="IPR029062">
    <property type="entry name" value="Class_I_gatase-like"/>
</dbReference>
<dbReference type="InterPro" id="IPR010075">
    <property type="entry name" value="PRibForGlyAmidine_synth_PurQ"/>
</dbReference>
<dbReference type="NCBIfam" id="TIGR01737">
    <property type="entry name" value="FGAM_synth_I"/>
    <property type="match status" value="1"/>
</dbReference>
<dbReference type="NCBIfam" id="NF002957">
    <property type="entry name" value="PRK03619.1"/>
    <property type="match status" value="1"/>
</dbReference>
<dbReference type="PANTHER" id="PTHR47552">
    <property type="entry name" value="PHOSPHORIBOSYLFORMYLGLYCINAMIDINE SYNTHASE SUBUNIT PURQ"/>
    <property type="match status" value="1"/>
</dbReference>
<dbReference type="PANTHER" id="PTHR47552:SF1">
    <property type="entry name" value="PHOSPHORIBOSYLFORMYLGLYCINAMIDINE SYNTHASE SUBUNIT PURQ"/>
    <property type="match status" value="1"/>
</dbReference>
<dbReference type="Pfam" id="PF13507">
    <property type="entry name" value="GATase_5"/>
    <property type="match status" value="1"/>
</dbReference>
<dbReference type="PIRSF" id="PIRSF001586">
    <property type="entry name" value="FGAM_synth_I"/>
    <property type="match status" value="1"/>
</dbReference>
<dbReference type="SMART" id="SM01211">
    <property type="entry name" value="GATase_5"/>
    <property type="match status" value="1"/>
</dbReference>
<dbReference type="SUPFAM" id="SSF52317">
    <property type="entry name" value="Class I glutamine amidotransferase-like"/>
    <property type="match status" value="1"/>
</dbReference>
<dbReference type="PROSITE" id="PS51273">
    <property type="entry name" value="GATASE_TYPE_1"/>
    <property type="match status" value="1"/>
</dbReference>
<feature type="chain" id="PRO_1000124125" description="Phosphoribosylformylglycinamidine synthase subunit PurQ">
    <location>
        <begin position="1"/>
        <end position="227"/>
    </location>
</feature>
<feature type="domain" description="Glutamine amidotransferase type-1" evidence="1">
    <location>
        <begin position="2"/>
        <end position="226"/>
    </location>
</feature>
<feature type="active site" description="Nucleophile" evidence="1">
    <location>
        <position position="86"/>
    </location>
</feature>
<feature type="active site" evidence="1">
    <location>
        <position position="195"/>
    </location>
</feature>
<feature type="active site" evidence="1">
    <location>
        <position position="197"/>
    </location>
</feature>